<evidence type="ECO:0000250" key="1">
    <source>
        <dbReference type="UniProtKB" id="L0E2Z4"/>
    </source>
</evidence>
<evidence type="ECO:0000250" key="2">
    <source>
        <dbReference type="UniProtKB" id="O93868"/>
    </source>
</evidence>
<evidence type="ECO:0000255" key="3">
    <source>
        <dbReference type="PROSITE-ProRule" id="PRU10001"/>
    </source>
</evidence>
<evidence type="ECO:0000269" key="4">
    <source>
    </source>
</evidence>
<evidence type="ECO:0000269" key="5">
    <source>
    </source>
</evidence>
<evidence type="ECO:0000303" key="6">
    <source>
    </source>
</evidence>
<evidence type="ECO:0000305" key="7"/>
<protein>
    <recommendedName>
        <fullName evidence="6">Short-chain dehydrogenase/reductase VdtF</fullName>
        <ecNumber evidence="4">1.-.-.-</ecNumber>
    </recommendedName>
    <alternativeName>
        <fullName evidence="6">Viriditoxin biosynthesis cluster protein F</fullName>
    </alternativeName>
</protein>
<gene>
    <name evidence="6" type="primary">VdtF</name>
    <name type="ORF">C8Q69DRAFT_480057</name>
</gene>
<dbReference type="EC" id="1.-.-.-" evidence="4"/>
<dbReference type="EMBL" id="RCNU01000014">
    <property type="protein sequence ID" value="RWQ92171.1"/>
    <property type="molecule type" value="Genomic_DNA"/>
</dbReference>
<dbReference type="SMR" id="A0A443HJZ3"/>
<dbReference type="STRING" id="264951.A0A443HJZ3"/>
<dbReference type="VEuPathDB" id="FungiDB:C8Q69DRAFT_480057"/>
<dbReference type="Proteomes" id="UP000283841">
    <property type="component" value="Unassembled WGS sequence"/>
</dbReference>
<dbReference type="GO" id="GO:0016491">
    <property type="term" value="F:oxidoreductase activity"/>
    <property type="evidence" value="ECO:0000314"/>
    <property type="project" value="UniProt"/>
</dbReference>
<dbReference type="GO" id="GO:0016218">
    <property type="term" value="F:polyketide synthase activity"/>
    <property type="evidence" value="ECO:0000314"/>
    <property type="project" value="UniProt"/>
</dbReference>
<dbReference type="GO" id="GO:0140783">
    <property type="term" value="P:(M)-viriditoxin biosynthetic process"/>
    <property type="evidence" value="ECO:0000314"/>
    <property type="project" value="GO_Central"/>
</dbReference>
<dbReference type="CDD" id="cd05233">
    <property type="entry name" value="SDR_c"/>
    <property type="match status" value="1"/>
</dbReference>
<dbReference type="Gene3D" id="3.40.50.720">
    <property type="entry name" value="NAD(P)-binding Rossmann-like Domain"/>
    <property type="match status" value="1"/>
</dbReference>
<dbReference type="InterPro" id="IPR036291">
    <property type="entry name" value="NAD(P)-bd_dom_sf"/>
</dbReference>
<dbReference type="InterPro" id="IPR020904">
    <property type="entry name" value="Sc_DH/Rdtase_CS"/>
</dbReference>
<dbReference type="InterPro" id="IPR002347">
    <property type="entry name" value="SDR_fam"/>
</dbReference>
<dbReference type="InterPro" id="IPR052178">
    <property type="entry name" value="Sec_Metab_Biosynth_SDR"/>
</dbReference>
<dbReference type="PANTHER" id="PTHR43618">
    <property type="entry name" value="7-ALPHA-HYDROXYSTEROID DEHYDROGENASE"/>
    <property type="match status" value="1"/>
</dbReference>
<dbReference type="PANTHER" id="PTHR43618:SF18">
    <property type="entry name" value="SHORT CHAIN DEHYDROGENASE_REDUCTASE FAMILY (AFU_ORTHOLOGUE AFUA_5G12480)"/>
    <property type="match status" value="1"/>
</dbReference>
<dbReference type="Pfam" id="PF00106">
    <property type="entry name" value="adh_short"/>
    <property type="match status" value="1"/>
</dbReference>
<dbReference type="Pfam" id="PF13561">
    <property type="entry name" value="adh_short_C2"/>
    <property type="match status" value="1"/>
</dbReference>
<dbReference type="PRINTS" id="PR00081">
    <property type="entry name" value="GDHRDH"/>
</dbReference>
<dbReference type="PRINTS" id="PR00080">
    <property type="entry name" value="SDRFAMILY"/>
</dbReference>
<dbReference type="SUPFAM" id="SSF51735">
    <property type="entry name" value="NAD(P)-binding Rossmann-fold domains"/>
    <property type="match status" value="1"/>
</dbReference>
<dbReference type="PROSITE" id="PS00061">
    <property type="entry name" value="ADH_SHORT"/>
    <property type="match status" value="1"/>
</dbReference>
<accession>A0A443HJZ3</accession>
<reference key="1">
    <citation type="journal article" date="2018" name="Front. Microbiol.">
        <title>Genomic and genetic insights into a cosmopolitan fungus, Paecilomyces variotii (Eurotiales).</title>
        <authorList>
            <person name="Urquhart A.S."/>
            <person name="Mondo S.J."/>
            <person name="Maekelae M.R."/>
            <person name="Hane J.K."/>
            <person name="Wiebenga A."/>
            <person name="He G."/>
            <person name="Mihaltcheva S."/>
            <person name="Pangilinan J."/>
            <person name="Lipzen A."/>
            <person name="Barry K."/>
            <person name="de Vries R.P."/>
            <person name="Grigoriev I.V."/>
            <person name="Idnurm A."/>
        </authorList>
    </citation>
    <scope>NUCLEOTIDE SEQUENCE [LARGE SCALE GENOMIC DNA]</scope>
    <source>
        <strain>ATCC 90900 / JCM 12815 / CBS 101075</strain>
    </source>
</reference>
<reference key="2">
    <citation type="journal article" date="2019" name="Fungal Biol. Biotechnol.">
        <title>The fungal gene cluster for biosynthesis of the antibacterial agent viriditoxin.</title>
        <authorList>
            <person name="Urquhart A.S."/>
            <person name="Hu J."/>
            <person name="Chooi Y.H."/>
            <person name="Idnurm A."/>
        </authorList>
    </citation>
    <scope>IDENTIFICATION</scope>
    <scope>FUNCTION</scope>
    <scope>DISRUPTION PHENOTYPE</scope>
    <scope>PATHWAY</scope>
</reference>
<reference key="3">
    <citation type="journal article" date="2019" name="J. Am. Chem. Soc.">
        <title>Fungal dirigent protein controls the stereoselectivity of multicopper oxidase-catalyzed phenol coupling in viriditoxin biosynthesis.</title>
        <authorList>
            <person name="Hu J."/>
            <person name="Li H."/>
            <person name="Chooi Y.H."/>
        </authorList>
    </citation>
    <scope>FUNCTION</scope>
    <scope>CATALYTIC ACTIVITY</scope>
    <scope>PATHWAY</scope>
</reference>
<keyword id="KW-0521">NADP</keyword>
<keyword id="KW-0560">Oxidoreductase</keyword>
<keyword id="KW-1185">Reference proteome</keyword>
<proteinExistence type="evidence at protein level"/>
<feature type="chain" id="PRO_0000448346" description="Short-chain dehydrogenase/reductase VdtF">
    <location>
        <begin position="1"/>
        <end position="305"/>
    </location>
</feature>
<feature type="active site" description="Proton donor" evidence="2">
    <location>
        <position position="192"/>
    </location>
</feature>
<feature type="active site" description="Proton acceptor" evidence="3">
    <location>
        <position position="206"/>
    </location>
</feature>
<feature type="active site" description="Lowers pKa of active site Tyr" evidence="2">
    <location>
        <position position="210"/>
    </location>
</feature>
<feature type="binding site" evidence="1">
    <location>
        <position position="28"/>
    </location>
    <ligand>
        <name>NADP(+)</name>
        <dbReference type="ChEBI" id="CHEBI:58349"/>
    </ligand>
</feature>
<feature type="binding site" evidence="2">
    <location>
        <position position="98"/>
    </location>
    <ligand>
        <name>NADP(+)</name>
        <dbReference type="ChEBI" id="CHEBI:58349"/>
    </ligand>
</feature>
<feature type="binding site" evidence="2">
    <location>
        <position position="206"/>
    </location>
    <ligand>
        <name>NADP(+)</name>
        <dbReference type="ChEBI" id="CHEBI:58349"/>
    </ligand>
</feature>
<feature type="binding site" evidence="2">
    <location>
        <position position="210"/>
    </location>
    <ligand>
        <name>NADP(+)</name>
        <dbReference type="ChEBI" id="CHEBI:58349"/>
    </ligand>
</feature>
<feature type="binding site" evidence="1">
    <location>
        <position position="241"/>
    </location>
    <ligand>
        <name>NADP(+)</name>
        <dbReference type="ChEBI" id="CHEBI:58349"/>
    </ligand>
</feature>
<comment type="function">
    <text evidence="4 5">Short-chain dehydrogenase/reductase; part of the gene cluster that mediates the biosynthesis of viriditoxin, one of the 'classical' secondary metabolites produced by fungi and that has antibacterial activity (PubMed:31045362, PubMed:31304040). The first step is performed by the polyketide synthase VdtA which condenses one acetyl-CoA and 6 malonyl-CoA units to form the heptaketide monomer backbone of viriditoxin (PubMed:31304040). The product of VdtA is then O-methylated on C7 by the O-methyltransferase VdtC (PubMed:31045362, PubMed:31304040). The O-methyl group is important for the stereoselective coupling of the monomers at the final step of viriditoxin biosynthesis (PubMed:31045362, PubMed:31304040). The short-chain dehydrogenase/reductase VdtF then acts as a stereospecific reductase converting the pyrone to dihydropyrone via the reduction of the C3-C4 double bond (PubMed:31045362, PubMed:31304040). The FAD-binding monooxygenase VdtE then converts the ketone group into a methyl-ester group to yield semi-viriditoxin (PubMed:31045362, PubMed:31304040). Finally, the laccase VdtB is involved in dimerization of 2 semi-viriditoxin molecules to yield the final viriditoxin (PubMed:31045362, PubMed:31304040). VdtB is responsible for the regioselective 6,6'-coupling of semi-viriditoxin, which yields (M)-viriditoxin and (P)-viriditoxin at a ratio of 1:2 (PubMed:31045362, PubMed:31304040). The non-catalytic carboxylesterase-like protein VdtD affects the stereochemistical outcome of the coupling (PubMed:31045362, PubMed:31304040). The highly reducing polyketide synthase VdtX is not involved in viriditoxin synthesis, but might possibly play a role in the production of additional metabolites not identified yet (PubMed:31045362, PubMed:31304040).</text>
</comment>
<comment type="catalytic activity">
    <reaction evidence="4">
        <text>methyl 2-[(3S)-9,10-dihydroxy-7-methoxy-1-oxo-1H,3H,4H-naphtho[2,3-c]pyran-3-yl]acetate + AH2 = semiviriditoxin + A</text>
        <dbReference type="Rhea" id="RHEA:62876"/>
        <dbReference type="ChEBI" id="CHEBI:13193"/>
        <dbReference type="ChEBI" id="CHEBI:17499"/>
        <dbReference type="ChEBI" id="CHEBI:146008"/>
        <dbReference type="ChEBI" id="CHEBI:146012"/>
    </reaction>
    <physiologicalReaction direction="left-to-right" evidence="4">
        <dbReference type="Rhea" id="RHEA:62877"/>
    </physiologicalReaction>
</comment>
<comment type="catalytic activity">
    <reaction evidence="4">
        <text>9,10-dihydroxy-7-methoxy-3-(2-oxopropyl)-1H-benzo[g]isochromen-1-one + AH2 = (3S)-9,10-dihydroxy-7-methoxy-3-(2-oxopropyl)-1H,3H,4H-naphtho[2,3-c]pyran-1-one + A</text>
        <dbReference type="Rhea" id="RHEA:62880"/>
        <dbReference type="ChEBI" id="CHEBI:13193"/>
        <dbReference type="ChEBI" id="CHEBI:17499"/>
        <dbReference type="ChEBI" id="CHEBI:146010"/>
        <dbReference type="ChEBI" id="CHEBI:146011"/>
    </reaction>
    <physiologicalReaction direction="left-to-right" evidence="4">
        <dbReference type="Rhea" id="RHEA:62881"/>
    </physiologicalReaction>
</comment>
<comment type="pathway">
    <text evidence="4 5">Secondary metabolite biosynthesis.</text>
</comment>
<comment type="disruption phenotype">
    <text evidence="5">Impairs the reduction of the C3-C4 doucle bond in the heptaketide monomer.</text>
</comment>
<comment type="similarity">
    <text evidence="7">Belongs to the short-chain dehydrogenases/reductases (SDR) family.</text>
</comment>
<organism>
    <name type="scientific">Byssochlamys spectabilis</name>
    <name type="common">Paecilomyces variotii</name>
    <dbReference type="NCBI Taxonomy" id="264951"/>
    <lineage>
        <taxon>Eukaryota</taxon>
        <taxon>Fungi</taxon>
        <taxon>Dikarya</taxon>
        <taxon>Ascomycota</taxon>
        <taxon>Pezizomycotina</taxon>
        <taxon>Eurotiomycetes</taxon>
        <taxon>Eurotiomycetidae</taxon>
        <taxon>Eurotiales</taxon>
        <taxon>Thermoascaceae</taxon>
        <taxon>Paecilomyces</taxon>
    </lineage>
</organism>
<sequence>MDGKALTASSLFDITGRVAVITGGGTGLGLMMAKALEANGAKVYILGRRLEPLQEAAKQSTHGNIHPVQCSVTSHADLQGVVDHIAAKDGYINLLVNNAGISTPNLGPHATRPTPKWDISKVRDYWFHKSFADYAAVFETNTTASLMVTFAFLELLDKGNKKSEEEAKASQARNGAGKARIEYVRSQVVTLSSVGGFGRDNSAFIYGASKAAATHMMKNLATYLAPWKIRVNVIAPGYFNTDMMGNFYKATGGRLPASLAPEERFGDAQEIGGTIVYLASKAGAYCNGMVLLVDGGYVSNKPSSY</sequence>
<name>VDTF1_BYSSP</name>